<keyword id="KW-1015">Disulfide bond</keyword>
<keyword id="KW-0964">Secreted</keyword>
<keyword id="KW-0732">Signal</keyword>
<gene>
    <name evidence="1" type="primary">yebF</name>
    <name type="ordered locus">SeSA_A2035</name>
</gene>
<proteinExistence type="inferred from homology"/>
<accession>B4TYQ4</accession>
<feature type="signal peptide" evidence="1">
    <location>
        <begin position="1"/>
        <end position="21"/>
    </location>
</feature>
<feature type="chain" id="PRO_1000145841" description="Protein YebF">
    <location>
        <begin position="22"/>
        <end position="117"/>
    </location>
</feature>
<feature type="domain" description="YebF/Cmi" evidence="2">
    <location>
        <begin position="30"/>
        <end position="117"/>
    </location>
</feature>
<feature type="disulfide bond" evidence="2">
    <location>
        <begin position="34"/>
        <end position="107"/>
    </location>
</feature>
<protein>
    <recommendedName>
        <fullName evidence="1">Protein YebF</fullName>
    </recommendedName>
</protein>
<evidence type="ECO:0000255" key="1">
    <source>
        <dbReference type="HAMAP-Rule" id="MF_01435"/>
    </source>
</evidence>
<evidence type="ECO:0000255" key="2">
    <source>
        <dbReference type="PROSITE-ProRule" id="PRU01323"/>
    </source>
</evidence>
<sequence length="117" mass="12774">MNKRGALLSLLLLSASVSAFAASTESKSVKFPQCEGLDAAGIAASVKRDYQQNRIVRWADDQKKVGQADPVAWVNVQDVVGQNDKWTVPLTVRGKSADIHYQVIVDCKAGKAEYKPR</sequence>
<organism>
    <name type="scientific">Salmonella schwarzengrund (strain CVM19633)</name>
    <dbReference type="NCBI Taxonomy" id="439843"/>
    <lineage>
        <taxon>Bacteria</taxon>
        <taxon>Pseudomonadati</taxon>
        <taxon>Pseudomonadota</taxon>
        <taxon>Gammaproteobacteria</taxon>
        <taxon>Enterobacterales</taxon>
        <taxon>Enterobacteriaceae</taxon>
        <taxon>Salmonella</taxon>
    </lineage>
</organism>
<dbReference type="EMBL" id="CP001127">
    <property type="protein sequence ID" value="ACF92709.1"/>
    <property type="molecule type" value="Genomic_DNA"/>
</dbReference>
<dbReference type="RefSeq" id="WP_001042123.1">
    <property type="nucleotide sequence ID" value="NC_011094.1"/>
</dbReference>
<dbReference type="SMR" id="B4TYQ4"/>
<dbReference type="KEGG" id="sew:SeSA_A2035"/>
<dbReference type="HOGENOM" id="CLU_161319_1_0_6"/>
<dbReference type="Proteomes" id="UP000001865">
    <property type="component" value="Chromosome"/>
</dbReference>
<dbReference type="GO" id="GO:0005576">
    <property type="term" value="C:extracellular region"/>
    <property type="evidence" value="ECO:0007669"/>
    <property type="project" value="UniProtKB-SubCell"/>
</dbReference>
<dbReference type="Gene3D" id="3.10.450.300">
    <property type="entry name" value="YebF/Colicin-M immunity protein"/>
    <property type="match status" value="1"/>
</dbReference>
<dbReference type="HAMAP" id="MF_01435">
    <property type="entry name" value="YebF"/>
    <property type="match status" value="1"/>
</dbReference>
<dbReference type="InterPro" id="IPR020236">
    <property type="entry name" value="Uncharacterised_YebF"/>
</dbReference>
<dbReference type="InterPro" id="IPR038703">
    <property type="entry name" value="YebF/Cmi_sf"/>
</dbReference>
<dbReference type="InterPro" id="IPR025603">
    <property type="entry name" value="YebF/ColM_immunity"/>
</dbReference>
<dbReference type="NCBIfam" id="NF010224">
    <property type="entry name" value="PRK13680.1"/>
    <property type="match status" value="1"/>
</dbReference>
<dbReference type="NCBIfam" id="NF041240">
    <property type="entry name" value="YebF_not_Cmi"/>
    <property type="match status" value="1"/>
</dbReference>
<dbReference type="Pfam" id="PF13995">
    <property type="entry name" value="YebF"/>
    <property type="match status" value="1"/>
</dbReference>
<dbReference type="PROSITE" id="PS51979">
    <property type="entry name" value="YEBF_CMI"/>
    <property type="match status" value="1"/>
</dbReference>
<reference key="1">
    <citation type="journal article" date="2011" name="J. Bacteriol.">
        <title>Comparative genomics of 28 Salmonella enterica isolates: evidence for CRISPR-mediated adaptive sublineage evolution.</title>
        <authorList>
            <person name="Fricke W.F."/>
            <person name="Mammel M.K."/>
            <person name="McDermott P.F."/>
            <person name="Tartera C."/>
            <person name="White D.G."/>
            <person name="Leclerc J.E."/>
            <person name="Ravel J."/>
            <person name="Cebula T.A."/>
        </authorList>
    </citation>
    <scope>NUCLEOTIDE SEQUENCE [LARGE SCALE GENOMIC DNA]</scope>
    <source>
        <strain>CVM19633</strain>
    </source>
</reference>
<comment type="subcellular location">
    <subcellularLocation>
        <location evidence="1">Secreted</location>
    </subcellularLocation>
</comment>
<comment type="similarity">
    <text evidence="1">Belongs to the YebF family.</text>
</comment>
<name>YEBF_SALSV</name>